<dbReference type="EC" id="1.7.1.7" evidence="1"/>
<dbReference type="EMBL" id="AE001437">
    <property type="protein sequence ID" value="AAK81399.1"/>
    <property type="molecule type" value="Genomic_DNA"/>
</dbReference>
<dbReference type="PIR" id="D97326">
    <property type="entry name" value="D97326"/>
</dbReference>
<dbReference type="RefSeq" id="NP_350059.1">
    <property type="nucleotide sequence ID" value="NC_003030.1"/>
</dbReference>
<dbReference type="RefSeq" id="WP_010966739.1">
    <property type="nucleotide sequence ID" value="NC_003030.1"/>
</dbReference>
<dbReference type="SMR" id="Q97DK4"/>
<dbReference type="STRING" id="272562.CA_C3471"/>
<dbReference type="GeneID" id="44999965"/>
<dbReference type="KEGG" id="cac:CA_C3471"/>
<dbReference type="PATRIC" id="fig|272562.8.peg.3655"/>
<dbReference type="eggNOG" id="COG0516">
    <property type="taxonomic scope" value="Bacteria"/>
</dbReference>
<dbReference type="HOGENOM" id="CLU_022552_5_0_9"/>
<dbReference type="OrthoDB" id="9805398at2"/>
<dbReference type="Proteomes" id="UP000000814">
    <property type="component" value="Chromosome"/>
</dbReference>
<dbReference type="GO" id="GO:0005829">
    <property type="term" value="C:cytosol"/>
    <property type="evidence" value="ECO:0007669"/>
    <property type="project" value="TreeGrafter"/>
</dbReference>
<dbReference type="GO" id="GO:1902560">
    <property type="term" value="C:GMP reductase complex"/>
    <property type="evidence" value="ECO:0007669"/>
    <property type="project" value="InterPro"/>
</dbReference>
<dbReference type="GO" id="GO:0003920">
    <property type="term" value="F:GMP reductase activity"/>
    <property type="evidence" value="ECO:0007669"/>
    <property type="project" value="UniProtKB-UniRule"/>
</dbReference>
<dbReference type="GO" id="GO:0006163">
    <property type="term" value="P:purine nucleotide metabolic process"/>
    <property type="evidence" value="ECO:0007669"/>
    <property type="project" value="UniProtKB-UniRule"/>
</dbReference>
<dbReference type="CDD" id="cd00381">
    <property type="entry name" value="IMPDH"/>
    <property type="match status" value="1"/>
</dbReference>
<dbReference type="FunFam" id="3.20.20.70:FF:000079">
    <property type="entry name" value="GMP reductase"/>
    <property type="match status" value="1"/>
</dbReference>
<dbReference type="Gene3D" id="3.20.20.70">
    <property type="entry name" value="Aldolase class I"/>
    <property type="match status" value="1"/>
</dbReference>
<dbReference type="HAMAP" id="MF_01511">
    <property type="entry name" value="GMP_reduct_type2"/>
    <property type="match status" value="1"/>
</dbReference>
<dbReference type="InterPro" id="IPR013785">
    <property type="entry name" value="Aldolase_TIM"/>
</dbReference>
<dbReference type="InterPro" id="IPR050139">
    <property type="entry name" value="GMP_reductase"/>
</dbReference>
<dbReference type="InterPro" id="IPR005994">
    <property type="entry name" value="GuaC_type_2"/>
</dbReference>
<dbReference type="InterPro" id="IPR015875">
    <property type="entry name" value="IMP_DH/GMP_Rdtase_CS"/>
</dbReference>
<dbReference type="InterPro" id="IPR001093">
    <property type="entry name" value="IMP_DH_GMPRt"/>
</dbReference>
<dbReference type="NCBIfam" id="TIGR01306">
    <property type="entry name" value="GMP_reduct_2"/>
    <property type="match status" value="1"/>
</dbReference>
<dbReference type="NCBIfam" id="NF003966">
    <property type="entry name" value="PRK05458.1"/>
    <property type="match status" value="1"/>
</dbReference>
<dbReference type="PANTHER" id="PTHR43170">
    <property type="entry name" value="GMP REDUCTASE"/>
    <property type="match status" value="1"/>
</dbReference>
<dbReference type="PANTHER" id="PTHR43170:SF5">
    <property type="entry name" value="GMP REDUCTASE"/>
    <property type="match status" value="1"/>
</dbReference>
<dbReference type="Pfam" id="PF00478">
    <property type="entry name" value="IMPDH"/>
    <property type="match status" value="1"/>
</dbReference>
<dbReference type="PIRSF" id="PIRSF036500">
    <property type="entry name" value="GMP_red_Firmic"/>
    <property type="match status" value="1"/>
</dbReference>
<dbReference type="SMART" id="SM01240">
    <property type="entry name" value="IMPDH"/>
    <property type="match status" value="1"/>
</dbReference>
<dbReference type="SUPFAM" id="SSF51412">
    <property type="entry name" value="Inosine monophosphate dehydrogenase (IMPDH)"/>
    <property type="match status" value="1"/>
</dbReference>
<dbReference type="PROSITE" id="PS00487">
    <property type="entry name" value="IMP_DH_GMP_RED"/>
    <property type="match status" value="1"/>
</dbReference>
<keyword id="KW-0521">NADP</keyword>
<keyword id="KW-0560">Oxidoreductase</keyword>
<keyword id="KW-1185">Reference proteome</keyword>
<feature type="chain" id="PRO_0000093754" description="GMP reductase">
    <location>
        <begin position="1"/>
        <end position="327"/>
    </location>
</feature>
<feature type="active site" description="Thioimidate intermediate" evidence="1">
    <location>
        <position position="175"/>
    </location>
</feature>
<feature type="binding site" evidence="1">
    <location>
        <begin position="204"/>
        <end position="227"/>
    </location>
    <ligand>
        <name>NADP(+)</name>
        <dbReference type="ChEBI" id="CHEBI:58349"/>
    </ligand>
</feature>
<gene>
    <name evidence="1" type="primary">guaC</name>
    <name type="ordered locus">CA_C3471</name>
</gene>
<organism>
    <name type="scientific">Clostridium acetobutylicum (strain ATCC 824 / DSM 792 / JCM 1419 / IAM 19013 / LMG 5710 / NBRC 13948 / NRRL B-527 / VKM B-1787 / 2291 / W)</name>
    <dbReference type="NCBI Taxonomy" id="272562"/>
    <lineage>
        <taxon>Bacteria</taxon>
        <taxon>Bacillati</taxon>
        <taxon>Bacillota</taxon>
        <taxon>Clostridia</taxon>
        <taxon>Eubacteriales</taxon>
        <taxon>Clostridiaceae</taxon>
        <taxon>Clostridium</taxon>
    </lineage>
</organism>
<sequence>MESVFDYEDIQLIPAKCIVRSRSECDTSVILGEHSFRLPVVPANMQTIIDENIALFLAQNGYFYIMHRFEPEKRLSFIKNMKSKGLFASISVGVKREEYDFIKQLAQENLSPEYITIDIAHGHSNTVIEMIQHIKKYLPKSFVIAGNVGTPEAVRELEHAGADATKVGIGPGKVCITKIKTGFGTGGWQLAALRWCSKAASKPIIADGGIRTPGDIAKSIRFGATMVMIGSLFAGHEESPGETIEKDGKLYKEYFGSASEFQKGEKRNVEGKKMFVEYKGPLKDTLIEMEQDLQSSISYAGGKSLDAIRTVDYVIVKNSIFNGDRIY</sequence>
<reference key="1">
    <citation type="journal article" date="2001" name="J. Bacteriol.">
        <title>Genome sequence and comparative analysis of the solvent-producing bacterium Clostridium acetobutylicum.</title>
        <authorList>
            <person name="Noelling J."/>
            <person name="Breton G."/>
            <person name="Omelchenko M.V."/>
            <person name="Makarova K.S."/>
            <person name="Zeng Q."/>
            <person name="Gibson R."/>
            <person name="Lee H.M."/>
            <person name="Dubois J."/>
            <person name="Qiu D."/>
            <person name="Hitti J."/>
            <person name="Wolf Y.I."/>
            <person name="Tatusov R.L."/>
            <person name="Sabathe F."/>
            <person name="Doucette-Stamm L.A."/>
            <person name="Soucaille P."/>
            <person name="Daly M.J."/>
            <person name="Bennett G.N."/>
            <person name="Koonin E.V."/>
            <person name="Smith D.R."/>
        </authorList>
    </citation>
    <scope>NUCLEOTIDE SEQUENCE [LARGE SCALE GENOMIC DNA]</scope>
    <source>
        <strain>ATCC 824 / DSM 792 / JCM 1419 / IAM 19013 / LMG 5710 / NBRC 13948 / NRRL B-527 / VKM B-1787 / 2291 / W</strain>
    </source>
</reference>
<name>GUAC_CLOAB</name>
<evidence type="ECO:0000255" key="1">
    <source>
        <dbReference type="HAMAP-Rule" id="MF_01511"/>
    </source>
</evidence>
<accession>Q97DK4</accession>
<comment type="function">
    <text evidence="1">Catalyzes the irreversible NADPH-dependent deamination of GMP to IMP. It functions in the conversion of nucleobase, nucleoside and nucleotide derivatives of G to A nucleotides, and in maintaining the intracellular balance of A and G nucleotides.</text>
</comment>
<comment type="catalytic activity">
    <reaction evidence="1">
        <text>IMP + NH4(+) + NADP(+) = GMP + NADPH + 2 H(+)</text>
        <dbReference type="Rhea" id="RHEA:17185"/>
        <dbReference type="ChEBI" id="CHEBI:15378"/>
        <dbReference type="ChEBI" id="CHEBI:28938"/>
        <dbReference type="ChEBI" id="CHEBI:57783"/>
        <dbReference type="ChEBI" id="CHEBI:58053"/>
        <dbReference type="ChEBI" id="CHEBI:58115"/>
        <dbReference type="ChEBI" id="CHEBI:58349"/>
        <dbReference type="EC" id="1.7.1.7"/>
    </reaction>
</comment>
<comment type="similarity">
    <text evidence="1">Belongs to the IMPDH/GMPR family. GuaC type 2 subfamily.</text>
</comment>
<proteinExistence type="inferred from homology"/>
<protein>
    <recommendedName>
        <fullName evidence="1">GMP reductase</fullName>
        <ecNumber evidence="1">1.7.1.7</ecNumber>
    </recommendedName>
    <alternativeName>
        <fullName evidence="1">Guanosine 5'-monophosphate oxidoreductase</fullName>
        <shortName evidence="1">Guanosine monophosphate reductase</shortName>
    </alternativeName>
</protein>